<dbReference type="EMBL" id="AP001306">
    <property type="protein sequence ID" value="BAB03064.1"/>
    <property type="molecule type" value="Genomic_DNA"/>
</dbReference>
<dbReference type="EMBL" id="CP002686">
    <property type="protein sequence ID" value="AEE76595.1"/>
    <property type="molecule type" value="Genomic_DNA"/>
</dbReference>
<dbReference type="EMBL" id="AY088580">
    <property type="protein sequence ID" value="AAM66111.1"/>
    <property type="molecule type" value="mRNA"/>
</dbReference>
<dbReference type="RefSeq" id="NP_566699.1">
    <property type="nucleotide sequence ID" value="NM_113113.4"/>
</dbReference>
<dbReference type="FunCoup" id="Q9LIE6">
    <property type="interactions" value="26"/>
</dbReference>
<dbReference type="STRING" id="3702.Q9LIE6"/>
<dbReference type="PaxDb" id="3702-AT3G22160.1"/>
<dbReference type="ProteomicsDB" id="242630"/>
<dbReference type="EnsemblPlants" id="AT3G22160.1">
    <property type="protein sequence ID" value="AT3G22160.1"/>
    <property type="gene ID" value="AT3G22160"/>
</dbReference>
<dbReference type="GeneID" id="821780"/>
<dbReference type="Gramene" id="AT3G22160.1">
    <property type="protein sequence ID" value="AT3G22160.1"/>
    <property type="gene ID" value="AT3G22160"/>
</dbReference>
<dbReference type="KEGG" id="ath:AT3G22160"/>
<dbReference type="Araport" id="AT3G22160"/>
<dbReference type="TAIR" id="AT3G22160">
    <property type="gene designation" value="JAV1"/>
</dbReference>
<dbReference type="eggNOG" id="ENOG502S4XE">
    <property type="taxonomic scope" value="Eukaryota"/>
</dbReference>
<dbReference type="HOGENOM" id="CLU_1404256_0_0_1"/>
<dbReference type="InParanoid" id="Q9LIE6"/>
<dbReference type="OMA" id="MANPNEW"/>
<dbReference type="OrthoDB" id="1726347at2759"/>
<dbReference type="PhylomeDB" id="Q9LIE6"/>
<dbReference type="PRO" id="PR:Q9LIE6"/>
<dbReference type="Proteomes" id="UP000006548">
    <property type="component" value="Chromosome 3"/>
</dbReference>
<dbReference type="ExpressionAtlas" id="Q9LIE6">
    <property type="expression patterns" value="baseline and differential"/>
</dbReference>
<dbReference type="GO" id="GO:0005634">
    <property type="term" value="C:nucleus"/>
    <property type="evidence" value="ECO:0000314"/>
    <property type="project" value="TAIR"/>
</dbReference>
<dbReference type="InterPro" id="IPR008889">
    <property type="entry name" value="VQ"/>
</dbReference>
<dbReference type="InterPro" id="IPR039609">
    <property type="entry name" value="VQ_15/22"/>
</dbReference>
<dbReference type="PANTHER" id="PTHR33179">
    <property type="entry name" value="VQ MOTIF-CONTAINING PROTEIN"/>
    <property type="match status" value="1"/>
</dbReference>
<dbReference type="PANTHER" id="PTHR33179:SF46">
    <property type="entry name" value="VQ MOTIF-CONTAINING PROTEIN 22"/>
    <property type="match status" value="1"/>
</dbReference>
<dbReference type="Pfam" id="PF05678">
    <property type="entry name" value="VQ"/>
    <property type="match status" value="1"/>
</dbReference>
<sequence length="192" mass="20390">MANPNEWSQFYNNNQTFFTTSTTASTAVTTTTAGDTTSIDSRLSPETGRVTKPTRRRSRASRRTPTTLLNTDTSNFRAMVQQYTGGPSAMAFGSGNTTSAFSLTSSSDPSAGSSQQAPWQYNFQPHAPLQPPQRPYMFSLNNVNPVVGYSNMNNPNTMVSGVFGTVDGSGGGGSAPSSKEATNSNSSSSRLQ</sequence>
<proteinExistence type="evidence at transcript level"/>
<accession>Q9LIE6</accession>
<gene>
    <name evidence="4" type="primary">VQ22</name>
    <name evidence="7" type="ordered locus">At3g22160</name>
    <name evidence="8" type="ORF">MKA23.7</name>
</gene>
<feature type="chain" id="PRO_0000432318" description="VQ motif-containing protein 22">
    <location>
        <begin position="1"/>
        <end position="192"/>
    </location>
</feature>
<feature type="region of interest" description="Disordered" evidence="2">
    <location>
        <begin position="24"/>
        <end position="65"/>
    </location>
</feature>
<feature type="region of interest" description="Disordered" evidence="2">
    <location>
        <begin position="101"/>
        <end position="135"/>
    </location>
</feature>
<feature type="region of interest" description="Disordered" evidence="2">
    <location>
        <begin position="163"/>
        <end position="192"/>
    </location>
</feature>
<feature type="short sequence motif" description="VQ" evidence="5">
    <location>
        <begin position="76"/>
        <end position="85"/>
    </location>
</feature>
<feature type="compositionally biased region" description="Low complexity" evidence="2">
    <location>
        <begin position="24"/>
        <end position="38"/>
    </location>
</feature>
<feature type="compositionally biased region" description="Basic residues" evidence="2">
    <location>
        <begin position="52"/>
        <end position="62"/>
    </location>
</feature>
<feature type="compositionally biased region" description="Low complexity" evidence="2">
    <location>
        <begin position="102"/>
        <end position="114"/>
    </location>
</feature>
<feature type="compositionally biased region" description="Low complexity" evidence="2">
    <location>
        <begin position="175"/>
        <end position="192"/>
    </location>
</feature>
<comment type="function">
    <text evidence="6">May function as positive regulator of plant growth.</text>
</comment>
<comment type="subcellular location">
    <subcellularLocation>
        <location evidence="1">Nucleus</location>
    </subcellularLocation>
</comment>
<comment type="miscellaneous">
    <text evidence="3">Plants over-expressing VQ22 show stunted growth phenotype.</text>
</comment>
<organism>
    <name type="scientific">Arabidopsis thaliana</name>
    <name type="common">Mouse-ear cress</name>
    <dbReference type="NCBI Taxonomy" id="3702"/>
    <lineage>
        <taxon>Eukaryota</taxon>
        <taxon>Viridiplantae</taxon>
        <taxon>Streptophyta</taxon>
        <taxon>Embryophyta</taxon>
        <taxon>Tracheophyta</taxon>
        <taxon>Spermatophyta</taxon>
        <taxon>Magnoliopsida</taxon>
        <taxon>eudicotyledons</taxon>
        <taxon>Gunneridae</taxon>
        <taxon>Pentapetalae</taxon>
        <taxon>rosids</taxon>
        <taxon>malvids</taxon>
        <taxon>Brassicales</taxon>
        <taxon>Brassicaceae</taxon>
        <taxon>Camelineae</taxon>
        <taxon>Arabidopsis</taxon>
    </lineage>
</organism>
<reference key="1">
    <citation type="journal article" date="2000" name="DNA Res.">
        <title>Structural analysis of Arabidopsis thaliana chromosome 3. II. Sequence features of the 4,251,695 bp regions covered by 90 P1, TAC and BAC clones.</title>
        <authorList>
            <person name="Kaneko T."/>
            <person name="Katoh T."/>
            <person name="Sato S."/>
            <person name="Nakamura Y."/>
            <person name="Asamizu E."/>
            <person name="Tabata S."/>
        </authorList>
    </citation>
    <scope>NUCLEOTIDE SEQUENCE [LARGE SCALE GENOMIC DNA]</scope>
    <source>
        <strain>cv. Columbia</strain>
    </source>
</reference>
<reference key="2">
    <citation type="journal article" date="2017" name="Plant J.">
        <title>Araport11: a complete reannotation of the Arabidopsis thaliana reference genome.</title>
        <authorList>
            <person name="Cheng C.Y."/>
            <person name="Krishnakumar V."/>
            <person name="Chan A.P."/>
            <person name="Thibaud-Nissen F."/>
            <person name="Schobel S."/>
            <person name="Town C.D."/>
        </authorList>
    </citation>
    <scope>GENOME REANNOTATION</scope>
    <source>
        <strain>cv. Columbia</strain>
    </source>
</reference>
<reference key="3">
    <citation type="submission" date="2002-03" db="EMBL/GenBank/DDBJ databases">
        <title>Full-length cDNA from Arabidopsis thaliana.</title>
        <authorList>
            <person name="Brover V.V."/>
            <person name="Troukhan M.E."/>
            <person name="Alexandrov N.A."/>
            <person name="Lu Y.-P."/>
            <person name="Flavell R.B."/>
            <person name="Feldmann K.A."/>
        </authorList>
    </citation>
    <scope>NUCLEOTIDE SEQUENCE [LARGE SCALE MRNA]</scope>
</reference>
<reference key="4">
    <citation type="journal article" date="2012" name="Plant Physiol.">
        <title>Structural and functional analysis of VQ motif-containing proteins in Arabidopsis as interacting proteins of WRKY transcription factors.</title>
        <authorList>
            <person name="Cheng Y."/>
            <person name="Zhou Y."/>
            <person name="Yang Y."/>
            <person name="Chi Y.J."/>
            <person name="Zhou J."/>
            <person name="Chen J.Y."/>
            <person name="Wang F."/>
            <person name="Fan B."/>
            <person name="Shi K."/>
            <person name="Zhou Y.H."/>
            <person name="Yu J.Q."/>
            <person name="Chen Z."/>
        </authorList>
    </citation>
    <scope>FUNCTION</scope>
    <scope>GENE FAMILY</scope>
    <scope>NOMENCLATURE</scope>
</reference>
<evidence type="ECO:0000250" key="1">
    <source>
        <dbReference type="UniProtKB" id="Q9M9F0"/>
    </source>
</evidence>
<evidence type="ECO:0000256" key="2">
    <source>
        <dbReference type="SAM" id="MobiDB-lite"/>
    </source>
</evidence>
<evidence type="ECO:0000269" key="3">
    <source>
    </source>
</evidence>
<evidence type="ECO:0000303" key="4">
    <source>
    </source>
</evidence>
<evidence type="ECO:0000305" key="5"/>
<evidence type="ECO:0000305" key="6">
    <source>
    </source>
</evidence>
<evidence type="ECO:0000312" key="7">
    <source>
        <dbReference type="Araport" id="AT3G22160"/>
    </source>
</evidence>
<evidence type="ECO:0000312" key="8">
    <source>
        <dbReference type="EMBL" id="BAB03064.1"/>
    </source>
</evidence>
<keyword id="KW-0539">Nucleus</keyword>
<keyword id="KW-1185">Reference proteome</keyword>
<protein>
    <recommendedName>
        <fullName evidence="4">VQ motif-containing protein 22</fullName>
        <shortName evidence="4">AtVQ22</shortName>
    </recommendedName>
</protein>
<name>VQ22_ARATH</name>